<name>SYV_PROMT</name>
<organism>
    <name type="scientific">Prochlorococcus marinus (strain NATL2A)</name>
    <dbReference type="NCBI Taxonomy" id="59920"/>
    <lineage>
        <taxon>Bacteria</taxon>
        <taxon>Bacillati</taxon>
        <taxon>Cyanobacteriota</taxon>
        <taxon>Cyanophyceae</taxon>
        <taxon>Synechococcales</taxon>
        <taxon>Prochlorococcaceae</taxon>
        <taxon>Prochlorococcus</taxon>
    </lineage>
</organism>
<dbReference type="EC" id="6.1.1.9" evidence="1"/>
<dbReference type="EMBL" id="CP000095">
    <property type="protein sequence ID" value="AAZ58771.1"/>
    <property type="molecule type" value="Genomic_DNA"/>
</dbReference>
<dbReference type="RefSeq" id="WP_011295625.1">
    <property type="nucleotide sequence ID" value="NC_007335.2"/>
</dbReference>
<dbReference type="SMR" id="Q46IA7"/>
<dbReference type="STRING" id="59920.PMN2A_1281"/>
<dbReference type="KEGG" id="pmn:PMN2A_1281"/>
<dbReference type="HOGENOM" id="CLU_001493_0_2_3"/>
<dbReference type="OrthoDB" id="9810365at2"/>
<dbReference type="PhylomeDB" id="Q46IA7"/>
<dbReference type="Proteomes" id="UP000002535">
    <property type="component" value="Chromosome"/>
</dbReference>
<dbReference type="GO" id="GO:0005829">
    <property type="term" value="C:cytosol"/>
    <property type="evidence" value="ECO:0007669"/>
    <property type="project" value="TreeGrafter"/>
</dbReference>
<dbReference type="GO" id="GO:0002161">
    <property type="term" value="F:aminoacyl-tRNA deacylase activity"/>
    <property type="evidence" value="ECO:0007669"/>
    <property type="project" value="InterPro"/>
</dbReference>
<dbReference type="GO" id="GO:0005524">
    <property type="term" value="F:ATP binding"/>
    <property type="evidence" value="ECO:0007669"/>
    <property type="project" value="UniProtKB-UniRule"/>
</dbReference>
<dbReference type="GO" id="GO:0004832">
    <property type="term" value="F:valine-tRNA ligase activity"/>
    <property type="evidence" value="ECO:0007669"/>
    <property type="project" value="UniProtKB-UniRule"/>
</dbReference>
<dbReference type="GO" id="GO:0006438">
    <property type="term" value="P:valyl-tRNA aminoacylation"/>
    <property type="evidence" value="ECO:0007669"/>
    <property type="project" value="UniProtKB-UniRule"/>
</dbReference>
<dbReference type="CDD" id="cd07962">
    <property type="entry name" value="Anticodon_Ia_Val"/>
    <property type="match status" value="1"/>
</dbReference>
<dbReference type="CDD" id="cd00817">
    <property type="entry name" value="ValRS_core"/>
    <property type="match status" value="1"/>
</dbReference>
<dbReference type="FunFam" id="1.10.287.380:FF:000001">
    <property type="entry name" value="Valine--tRNA ligase"/>
    <property type="match status" value="1"/>
</dbReference>
<dbReference type="FunFam" id="3.40.50.620:FF:000032">
    <property type="entry name" value="Valine--tRNA ligase"/>
    <property type="match status" value="1"/>
</dbReference>
<dbReference type="FunFam" id="3.40.50.620:FF:000078">
    <property type="entry name" value="Valine--tRNA ligase, mitochondrial"/>
    <property type="match status" value="1"/>
</dbReference>
<dbReference type="FunFam" id="3.90.740.10:FF:000005">
    <property type="entry name" value="Valine--tRNA ligase, mitochondrial"/>
    <property type="match status" value="1"/>
</dbReference>
<dbReference type="Gene3D" id="3.40.50.620">
    <property type="entry name" value="HUPs"/>
    <property type="match status" value="2"/>
</dbReference>
<dbReference type="Gene3D" id="1.10.730.10">
    <property type="entry name" value="Isoleucyl-tRNA Synthetase, Domain 1"/>
    <property type="match status" value="1"/>
</dbReference>
<dbReference type="Gene3D" id="1.10.287.380">
    <property type="entry name" value="Valyl-tRNA synthetase, C-terminal domain"/>
    <property type="match status" value="1"/>
</dbReference>
<dbReference type="Gene3D" id="3.90.740.10">
    <property type="entry name" value="Valyl/Leucyl/Isoleucyl-tRNA synthetase, editing domain"/>
    <property type="match status" value="1"/>
</dbReference>
<dbReference type="HAMAP" id="MF_02004">
    <property type="entry name" value="Val_tRNA_synth_type1"/>
    <property type="match status" value="1"/>
</dbReference>
<dbReference type="InterPro" id="IPR001412">
    <property type="entry name" value="aa-tRNA-synth_I_CS"/>
</dbReference>
<dbReference type="InterPro" id="IPR002300">
    <property type="entry name" value="aa-tRNA-synth_Ia"/>
</dbReference>
<dbReference type="InterPro" id="IPR033705">
    <property type="entry name" value="Anticodon_Ia_Val"/>
</dbReference>
<dbReference type="InterPro" id="IPR013155">
    <property type="entry name" value="M/V/L/I-tRNA-synth_anticd-bd"/>
</dbReference>
<dbReference type="InterPro" id="IPR014729">
    <property type="entry name" value="Rossmann-like_a/b/a_fold"/>
</dbReference>
<dbReference type="InterPro" id="IPR010978">
    <property type="entry name" value="tRNA-bd_arm"/>
</dbReference>
<dbReference type="InterPro" id="IPR009080">
    <property type="entry name" value="tRNAsynth_Ia_anticodon-bd"/>
</dbReference>
<dbReference type="InterPro" id="IPR037118">
    <property type="entry name" value="Val-tRNA_synth_C_sf"/>
</dbReference>
<dbReference type="InterPro" id="IPR019499">
    <property type="entry name" value="Val-tRNA_synth_tRNA-bd"/>
</dbReference>
<dbReference type="InterPro" id="IPR009008">
    <property type="entry name" value="Val/Leu/Ile-tRNA-synth_edit"/>
</dbReference>
<dbReference type="InterPro" id="IPR002303">
    <property type="entry name" value="Valyl-tRNA_ligase"/>
</dbReference>
<dbReference type="NCBIfam" id="NF004349">
    <property type="entry name" value="PRK05729.1"/>
    <property type="match status" value="1"/>
</dbReference>
<dbReference type="NCBIfam" id="TIGR00422">
    <property type="entry name" value="valS"/>
    <property type="match status" value="1"/>
</dbReference>
<dbReference type="PANTHER" id="PTHR11946:SF93">
    <property type="entry name" value="VALINE--TRNA LIGASE, CHLOROPLASTIC_MITOCHONDRIAL 2"/>
    <property type="match status" value="1"/>
</dbReference>
<dbReference type="PANTHER" id="PTHR11946">
    <property type="entry name" value="VALYL-TRNA SYNTHETASES"/>
    <property type="match status" value="1"/>
</dbReference>
<dbReference type="Pfam" id="PF08264">
    <property type="entry name" value="Anticodon_1"/>
    <property type="match status" value="1"/>
</dbReference>
<dbReference type="Pfam" id="PF00133">
    <property type="entry name" value="tRNA-synt_1"/>
    <property type="match status" value="1"/>
</dbReference>
<dbReference type="Pfam" id="PF10458">
    <property type="entry name" value="Val_tRNA-synt_C"/>
    <property type="match status" value="1"/>
</dbReference>
<dbReference type="PRINTS" id="PR00986">
    <property type="entry name" value="TRNASYNTHVAL"/>
</dbReference>
<dbReference type="SUPFAM" id="SSF47323">
    <property type="entry name" value="Anticodon-binding domain of a subclass of class I aminoacyl-tRNA synthetases"/>
    <property type="match status" value="1"/>
</dbReference>
<dbReference type="SUPFAM" id="SSF52374">
    <property type="entry name" value="Nucleotidylyl transferase"/>
    <property type="match status" value="1"/>
</dbReference>
<dbReference type="SUPFAM" id="SSF46589">
    <property type="entry name" value="tRNA-binding arm"/>
    <property type="match status" value="1"/>
</dbReference>
<dbReference type="SUPFAM" id="SSF50677">
    <property type="entry name" value="ValRS/IleRS/LeuRS editing domain"/>
    <property type="match status" value="1"/>
</dbReference>
<dbReference type="PROSITE" id="PS00178">
    <property type="entry name" value="AA_TRNA_LIGASE_I"/>
    <property type="match status" value="1"/>
</dbReference>
<evidence type="ECO:0000255" key="1">
    <source>
        <dbReference type="HAMAP-Rule" id="MF_02004"/>
    </source>
</evidence>
<evidence type="ECO:0000256" key="2">
    <source>
        <dbReference type="SAM" id="MobiDB-lite"/>
    </source>
</evidence>
<proteinExistence type="inferred from homology"/>
<gene>
    <name evidence="1" type="primary">valS</name>
    <name type="ordered locus">PMN2A_1281</name>
</gene>
<keyword id="KW-0030">Aminoacyl-tRNA synthetase</keyword>
<keyword id="KW-0067">ATP-binding</keyword>
<keyword id="KW-0175">Coiled coil</keyword>
<keyword id="KW-0963">Cytoplasm</keyword>
<keyword id="KW-0436">Ligase</keyword>
<keyword id="KW-0547">Nucleotide-binding</keyword>
<keyword id="KW-0648">Protein biosynthesis</keyword>
<keyword id="KW-1185">Reference proteome</keyword>
<protein>
    <recommendedName>
        <fullName evidence="1">Valine--tRNA ligase</fullName>
        <ecNumber evidence="1">6.1.1.9</ecNumber>
    </recommendedName>
    <alternativeName>
        <fullName evidence="1">Valyl-tRNA synthetase</fullName>
        <shortName evidence="1">ValRS</shortName>
    </alternativeName>
</protein>
<feature type="chain" id="PRO_0000224532" description="Valine--tRNA ligase">
    <location>
        <begin position="1"/>
        <end position="933"/>
    </location>
</feature>
<feature type="region of interest" description="Disordered" evidence="2">
    <location>
        <begin position="1"/>
        <end position="24"/>
    </location>
</feature>
<feature type="coiled-coil region" evidence="1">
    <location>
        <begin position="866"/>
        <end position="932"/>
    </location>
</feature>
<feature type="short sequence motif" description="'HIGH' region">
    <location>
        <begin position="57"/>
        <end position="67"/>
    </location>
</feature>
<feature type="short sequence motif" description="'KMSKS' region">
    <location>
        <begin position="557"/>
        <end position="561"/>
    </location>
</feature>
<feature type="binding site" evidence="1">
    <location>
        <position position="560"/>
    </location>
    <ligand>
        <name>ATP</name>
        <dbReference type="ChEBI" id="CHEBI:30616"/>
    </ligand>
</feature>
<reference key="1">
    <citation type="journal article" date="2007" name="PLoS Genet.">
        <title>Patterns and implications of gene gain and loss in the evolution of Prochlorococcus.</title>
        <authorList>
            <person name="Kettler G.C."/>
            <person name="Martiny A.C."/>
            <person name="Huang K."/>
            <person name="Zucker J."/>
            <person name="Coleman M.L."/>
            <person name="Rodrigue S."/>
            <person name="Chen F."/>
            <person name="Lapidus A."/>
            <person name="Ferriera S."/>
            <person name="Johnson J."/>
            <person name="Steglich C."/>
            <person name="Church G.M."/>
            <person name="Richardson P."/>
            <person name="Chisholm S.W."/>
        </authorList>
    </citation>
    <scope>NUCLEOTIDE SEQUENCE [LARGE SCALE GENOMIC DNA]</scope>
    <source>
        <strain>NATL2A</strain>
    </source>
</reference>
<sequence length="933" mass="105937">MIERVKTTKLSEASGLPKTYDPVGTENRWQKAWEEKGAFKPDPSAPGDPFSVVIPPPNVTGSLHMGHAFNTALIDTVVRYKRLKGNNVLCLPGTDHASIAVQTILERQLKEEGKNRRDLGRASFLEKAWEWKEKSGGRIVDQLKRLGYSVDWSRERFTLDEGLSKAVSEAFVRLHEKGLIYRGEYLVNWCPASGSAVSDLEVEMKEVDGHLWHFRYPLVTSSVSSAKQISYLEVATTRPETMLGDVAVAVNPSDERYKDLIGEKLTLPLVGRTIPIIGDPHVDKDFGTGCVKVTPAHDPNDFEIGQRHDLPQITVMTKKGTMNHNAGQFEGLDRFEAREAVIDSLKEIGLLTKIEAYKHSVPFSDRGKVPVEPLLSTQWFVKMDPLSSSCSEFFEKGQPKFIPNRWSKVYRDWLTDIRDWCISRQLWWGHRIPAWFVISQTDNKVVNETPYIVARTEDEAKKLAREKYGDSVKIEQDEDVLDTWFSSGLWPFSTLGWPDETHPDFQRWYPTNTLVTGFDIIFFWVARMTMMAGVFTERMPFADVYIHGLVRDEQNRKMSKSAGNGIDPLLLIERYGTDALRFALVREVAGAGQDIRLDFDRKNQTSATVEASRNFANKLWNATRFALINLEDQDYENLESYDSSKLQLSDRWILSRLARVNHETANRYENYALGEAAKGLYEFAWNDFCDWYLELIKRRLNNSENLSSDELLDRKIAKSVLYKVLSDLLIMLHPLMPHLTEELWHGLTGLDEDQFLALQPWPKSNEQDLNLDLESSFSDLFASIRLIRNLRAVAGLKPSQKVPVMLVSGKEVLQKTLTTSINDIAVLTKAKEVQILSPEQAKSLPSMKALAGVSGELEVVLPIEGLIDIASLRSRLEKDLNKAQKEIESLSGRLANKNFVDKAPKDVVEECRANLTESEAQVRLVKERLMGLD</sequence>
<accession>Q46IA7</accession>
<comment type="function">
    <text evidence="1">Catalyzes the attachment of valine to tRNA(Val). As ValRS can inadvertently accommodate and process structurally similar amino acids such as threonine, to avoid such errors, it has a 'posttransfer' editing activity that hydrolyzes mischarged Thr-tRNA(Val) in a tRNA-dependent manner.</text>
</comment>
<comment type="catalytic activity">
    <reaction evidence="1">
        <text>tRNA(Val) + L-valine + ATP = L-valyl-tRNA(Val) + AMP + diphosphate</text>
        <dbReference type="Rhea" id="RHEA:10704"/>
        <dbReference type="Rhea" id="RHEA-COMP:9672"/>
        <dbReference type="Rhea" id="RHEA-COMP:9708"/>
        <dbReference type="ChEBI" id="CHEBI:30616"/>
        <dbReference type="ChEBI" id="CHEBI:33019"/>
        <dbReference type="ChEBI" id="CHEBI:57762"/>
        <dbReference type="ChEBI" id="CHEBI:78442"/>
        <dbReference type="ChEBI" id="CHEBI:78537"/>
        <dbReference type="ChEBI" id="CHEBI:456215"/>
        <dbReference type="EC" id="6.1.1.9"/>
    </reaction>
</comment>
<comment type="subunit">
    <text evidence="1">Monomer.</text>
</comment>
<comment type="subcellular location">
    <subcellularLocation>
        <location evidence="1">Cytoplasm</location>
    </subcellularLocation>
</comment>
<comment type="domain">
    <text evidence="1">ValRS has two distinct active sites: one for aminoacylation and one for editing. The misactivated threonine is translocated from the active site to the editing site.</text>
</comment>
<comment type="domain">
    <text evidence="1">The C-terminal coiled-coil domain is crucial for aminoacylation activity.</text>
</comment>
<comment type="similarity">
    <text evidence="1">Belongs to the class-I aminoacyl-tRNA synthetase family. ValS type 1 subfamily.</text>
</comment>